<dbReference type="EMBL" id="AF077019">
    <property type="protein sequence ID" value="AAC27324.1"/>
    <property type="molecule type" value="mRNA"/>
</dbReference>
<dbReference type="EMBL" id="AF069765">
    <property type="protein sequence ID" value="AAC97490.1"/>
    <property type="molecule type" value="mRNA"/>
</dbReference>
<dbReference type="EMBL" id="BX537991">
    <property type="protein sequence ID" value="CAD97950.1"/>
    <property type="status" value="ALT_SEQ"/>
    <property type="molecule type" value="mRNA"/>
</dbReference>
<dbReference type="EMBL" id="AC114766">
    <property type="status" value="NOT_ANNOTATED_CDS"/>
    <property type="molecule type" value="Genomic_DNA"/>
</dbReference>
<dbReference type="EMBL" id="CH471057">
    <property type="protein sequence ID" value="EAX05498.1"/>
    <property type="molecule type" value="Genomic_DNA"/>
</dbReference>
<dbReference type="CCDS" id="CCDS3506.1">
    <molecule id="O76094-1"/>
</dbReference>
<dbReference type="CCDS" id="CCDS58898.1">
    <molecule id="O76094-2"/>
</dbReference>
<dbReference type="RefSeq" id="NP_001254651.1">
    <molecule id="O76094-2"/>
    <property type="nucleotide sequence ID" value="NM_001267722.2"/>
</dbReference>
<dbReference type="RefSeq" id="NP_008878.3">
    <molecule id="O76094-1"/>
    <property type="nucleotide sequence ID" value="NM_006947.3"/>
</dbReference>
<dbReference type="PDB" id="5M72">
    <property type="method" value="X-ray"/>
    <property type="resolution" value="1.60 A"/>
    <property type="chains" value="A=10-166"/>
</dbReference>
<dbReference type="PDB" id="5M73">
    <property type="method" value="X-ray"/>
    <property type="resolution" value="3.40 A"/>
    <property type="chains" value="D/H=513-662"/>
</dbReference>
<dbReference type="PDB" id="5WRV">
    <property type="method" value="X-ray"/>
    <property type="resolution" value="1.70 A"/>
    <property type="chains" value="B=1-163"/>
</dbReference>
<dbReference type="PDB" id="5WRW">
    <property type="method" value="X-ray"/>
    <property type="resolution" value="2.91 A"/>
    <property type="chains" value="A/B/C/D/E/F=1-163"/>
</dbReference>
<dbReference type="PDB" id="7NFX">
    <property type="method" value="EM"/>
    <property type="resolution" value="3.20 A"/>
    <property type="chains" value="z=1-671"/>
</dbReference>
<dbReference type="PDB" id="8QVW">
    <property type="method" value="EM"/>
    <property type="resolution" value="3.00 A"/>
    <property type="chains" value="B=1-671"/>
</dbReference>
<dbReference type="PDB" id="8QVX">
    <property type="method" value="EM"/>
    <property type="resolution" value="2.70 A"/>
    <property type="chains" value="B=1-671"/>
</dbReference>
<dbReference type="PDBsum" id="5M72"/>
<dbReference type="PDBsum" id="5M73"/>
<dbReference type="PDBsum" id="5WRV"/>
<dbReference type="PDBsum" id="5WRW"/>
<dbReference type="PDBsum" id="7NFX"/>
<dbReference type="PDBsum" id="8QVW"/>
<dbReference type="PDBsum" id="8QVX"/>
<dbReference type="EMDB" id="EMD-12303"/>
<dbReference type="EMDB" id="EMD-18674"/>
<dbReference type="EMDB" id="EMD-18677"/>
<dbReference type="SMR" id="O76094"/>
<dbReference type="BioGRID" id="112609">
    <property type="interactions" value="359"/>
</dbReference>
<dbReference type="ComplexPortal" id="CPX-2652">
    <property type="entry name" value="Signal recognition particle"/>
</dbReference>
<dbReference type="FunCoup" id="O76094">
    <property type="interactions" value="2262"/>
</dbReference>
<dbReference type="IntAct" id="O76094">
    <property type="interactions" value="246"/>
</dbReference>
<dbReference type="MINT" id="O76094"/>
<dbReference type="STRING" id="9606.ENSP00000495128"/>
<dbReference type="TCDB" id="3.A.5.9.1">
    <property type="family name" value="the general secretory pathway (sec) family"/>
</dbReference>
<dbReference type="GlyCosmos" id="O76094">
    <property type="glycosylation" value="1 site, 1 glycan"/>
</dbReference>
<dbReference type="GlyGen" id="O76094">
    <property type="glycosylation" value="3 sites, 2 N-linked glycans (2 sites), 1 O-linked glycan (1 site)"/>
</dbReference>
<dbReference type="iPTMnet" id="O76094"/>
<dbReference type="MetOSite" id="O76094"/>
<dbReference type="PhosphoSitePlus" id="O76094"/>
<dbReference type="SwissPalm" id="O76094"/>
<dbReference type="BioMuta" id="SRP72"/>
<dbReference type="jPOST" id="O76094"/>
<dbReference type="MassIVE" id="O76094"/>
<dbReference type="PaxDb" id="9606-ENSP00000342181"/>
<dbReference type="PeptideAtlas" id="O76094"/>
<dbReference type="ProteomicsDB" id="34096"/>
<dbReference type="ProteomicsDB" id="50412">
    <molecule id="O76094-1"/>
</dbReference>
<dbReference type="Pumba" id="O76094"/>
<dbReference type="Antibodypedia" id="24034">
    <property type="antibodies" value="96 antibodies from 25 providers"/>
</dbReference>
<dbReference type="DNASU" id="6731"/>
<dbReference type="Ensembl" id="ENST00000510663.6">
    <molecule id="O76094-2"/>
    <property type="protein sequence ID" value="ENSP00000424576.1"/>
    <property type="gene ID" value="ENSG00000174780.17"/>
</dbReference>
<dbReference type="Ensembl" id="ENST00000642900.1">
    <molecule id="O76094-1"/>
    <property type="protein sequence ID" value="ENSP00000495128.1"/>
    <property type="gene ID" value="ENSG00000174780.17"/>
</dbReference>
<dbReference type="GeneID" id="6731"/>
<dbReference type="KEGG" id="hsa:6731"/>
<dbReference type="MANE-Select" id="ENST00000642900.1">
    <property type="protein sequence ID" value="ENSP00000495128.1"/>
    <property type="RefSeq nucleotide sequence ID" value="NM_006947.4"/>
    <property type="RefSeq protein sequence ID" value="NP_008878.3"/>
</dbReference>
<dbReference type="UCSC" id="uc010ihe.4">
    <molecule id="O76094-1"/>
    <property type="organism name" value="human"/>
</dbReference>
<dbReference type="AGR" id="HGNC:11303"/>
<dbReference type="CTD" id="6731"/>
<dbReference type="DisGeNET" id="6731"/>
<dbReference type="GeneCards" id="SRP72"/>
<dbReference type="HGNC" id="HGNC:11303">
    <property type="gene designation" value="SRP72"/>
</dbReference>
<dbReference type="HPA" id="ENSG00000174780">
    <property type="expression patterns" value="Low tissue specificity"/>
</dbReference>
<dbReference type="MalaCards" id="SRP72"/>
<dbReference type="MIM" id="602122">
    <property type="type" value="gene"/>
</dbReference>
<dbReference type="MIM" id="614675">
    <property type="type" value="phenotype"/>
</dbReference>
<dbReference type="neXtProt" id="NX_O76094"/>
<dbReference type="OpenTargets" id="ENSG00000174780"/>
<dbReference type="Orphanet" id="314399">
    <property type="disease" value="Autosomal dominant aplasia and myelodysplasia"/>
</dbReference>
<dbReference type="PharmGKB" id="PA36127"/>
<dbReference type="VEuPathDB" id="HostDB:ENSG00000174780"/>
<dbReference type="eggNOG" id="KOG2376">
    <property type="taxonomic scope" value="Eukaryota"/>
</dbReference>
<dbReference type="GeneTree" id="ENSGT00390000013264"/>
<dbReference type="HOGENOM" id="CLU_013808_1_0_1"/>
<dbReference type="InParanoid" id="O76094"/>
<dbReference type="OMA" id="NDMKVLA"/>
<dbReference type="OrthoDB" id="5421607at2759"/>
<dbReference type="PAN-GO" id="O76094">
    <property type="GO annotations" value="4 GO annotations based on evolutionary models"/>
</dbReference>
<dbReference type="PhylomeDB" id="O76094"/>
<dbReference type="TreeFam" id="TF106250"/>
<dbReference type="PathwayCommons" id="O76094"/>
<dbReference type="Reactome" id="R-HSA-1799339">
    <property type="pathway name" value="SRP-dependent cotranslational protein targeting to membrane"/>
</dbReference>
<dbReference type="SignaLink" id="O76094"/>
<dbReference type="SIGNOR" id="O76094"/>
<dbReference type="BioGRID-ORCS" id="6731">
    <property type="hits" value="618 hits in 1178 CRISPR screens"/>
</dbReference>
<dbReference type="CD-CODE" id="91857CE7">
    <property type="entry name" value="Nucleolus"/>
</dbReference>
<dbReference type="CD-CODE" id="DEE660B4">
    <property type="entry name" value="Stress granule"/>
</dbReference>
<dbReference type="ChiTaRS" id="SRP72">
    <property type="organism name" value="human"/>
</dbReference>
<dbReference type="GenomeRNAi" id="6731"/>
<dbReference type="Pharos" id="O76094">
    <property type="development level" value="Tbio"/>
</dbReference>
<dbReference type="PRO" id="PR:O76094"/>
<dbReference type="Proteomes" id="UP000005640">
    <property type="component" value="Chromosome 4"/>
</dbReference>
<dbReference type="RNAct" id="O76094">
    <property type="molecule type" value="protein"/>
</dbReference>
<dbReference type="Bgee" id="ENSG00000174780">
    <property type="expression patterns" value="Expressed in pylorus and 216 other cell types or tissues"/>
</dbReference>
<dbReference type="ExpressionAtlas" id="O76094">
    <property type="expression patterns" value="baseline and differential"/>
</dbReference>
<dbReference type="GO" id="GO:0005829">
    <property type="term" value="C:cytosol"/>
    <property type="evidence" value="ECO:0000304"/>
    <property type="project" value="Reactome"/>
</dbReference>
<dbReference type="GO" id="GO:0005783">
    <property type="term" value="C:endoplasmic reticulum"/>
    <property type="evidence" value="ECO:0000314"/>
    <property type="project" value="UniProtKB"/>
</dbReference>
<dbReference type="GO" id="GO:0048500">
    <property type="term" value="C:signal recognition particle"/>
    <property type="evidence" value="ECO:0000314"/>
    <property type="project" value="CAFA"/>
</dbReference>
<dbReference type="GO" id="GO:0005786">
    <property type="term" value="C:signal recognition particle, endoplasmic reticulum targeting"/>
    <property type="evidence" value="ECO:0000314"/>
    <property type="project" value="UniProtKB"/>
</dbReference>
<dbReference type="GO" id="GO:0008312">
    <property type="term" value="F:7S RNA binding"/>
    <property type="evidence" value="ECO:0000315"/>
    <property type="project" value="CAFA"/>
</dbReference>
<dbReference type="GO" id="GO:0003723">
    <property type="term" value="F:RNA binding"/>
    <property type="evidence" value="ECO:0007005"/>
    <property type="project" value="UniProtKB"/>
</dbReference>
<dbReference type="GO" id="GO:0005047">
    <property type="term" value="F:signal recognition particle binding"/>
    <property type="evidence" value="ECO:0000353"/>
    <property type="project" value="UniProtKB"/>
</dbReference>
<dbReference type="GO" id="GO:0030911">
    <property type="term" value="F:TPR domain binding"/>
    <property type="evidence" value="ECO:0000353"/>
    <property type="project" value="CAFA"/>
</dbReference>
<dbReference type="GO" id="GO:0006614">
    <property type="term" value="P:SRP-dependent cotranslational protein targeting to membrane"/>
    <property type="evidence" value="ECO:0000318"/>
    <property type="project" value="GO_Central"/>
</dbReference>
<dbReference type="FunFam" id="1.25.40.10:FF:000062">
    <property type="entry name" value="Signal recognition particle subunit SRP72"/>
    <property type="match status" value="1"/>
</dbReference>
<dbReference type="FunFam" id="1.25.40.10:FF:000133">
    <property type="entry name" value="Signal recognition particle subunit SRP72"/>
    <property type="match status" value="1"/>
</dbReference>
<dbReference type="FunFam" id="1.25.40.10:FF:000369">
    <property type="entry name" value="Signal recognition particle subunit SRP72"/>
    <property type="match status" value="1"/>
</dbReference>
<dbReference type="FunFam" id="1.25.40.10:FF:000847">
    <property type="entry name" value="Signal recognition particle subunit SRP72"/>
    <property type="match status" value="1"/>
</dbReference>
<dbReference type="Gene3D" id="1.25.40.10">
    <property type="entry name" value="Tetratricopeptide repeat domain"/>
    <property type="match status" value="4"/>
</dbReference>
<dbReference type="InterPro" id="IPR013699">
    <property type="entry name" value="Signal_recog_part_SRP72_RNA-bd"/>
</dbReference>
<dbReference type="InterPro" id="IPR026270">
    <property type="entry name" value="SRP72"/>
</dbReference>
<dbReference type="InterPro" id="IPR031545">
    <property type="entry name" value="SRP72_TPR-like"/>
</dbReference>
<dbReference type="InterPro" id="IPR011990">
    <property type="entry name" value="TPR-like_helical_dom_sf"/>
</dbReference>
<dbReference type="InterPro" id="IPR019734">
    <property type="entry name" value="TPR_rpt"/>
</dbReference>
<dbReference type="PANTHER" id="PTHR14094">
    <property type="entry name" value="SIGNAL RECOGNITION PARTICLE 72"/>
    <property type="match status" value="1"/>
</dbReference>
<dbReference type="PANTHER" id="PTHR14094:SF9">
    <property type="entry name" value="SIGNAL RECOGNITION PARTICLE SUBUNIT SRP72"/>
    <property type="match status" value="1"/>
</dbReference>
<dbReference type="Pfam" id="PF08492">
    <property type="entry name" value="SRP72"/>
    <property type="match status" value="1"/>
</dbReference>
<dbReference type="Pfam" id="PF17004">
    <property type="entry name" value="SRP_TPR_like"/>
    <property type="match status" value="1"/>
</dbReference>
<dbReference type="Pfam" id="PF13181">
    <property type="entry name" value="TPR_8"/>
    <property type="match status" value="2"/>
</dbReference>
<dbReference type="PIRSF" id="PIRSF038922">
    <property type="entry name" value="SRP72"/>
    <property type="match status" value="1"/>
</dbReference>
<dbReference type="SMART" id="SM00028">
    <property type="entry name" value="TPR"/>
    <property type="match status" value="5"/>
</dbReference>
<dbReference type="SUPFAM" id="SSF48452">
    <property type="entry name" value="TPR-like"/>
    <property type="match status" value="2"/>
</dbReference>
<dbReference type="PROSITE" id="PS50005">
    <property type="entry name" value="TPR"/>
    <property type="match status" value="5"/>
</dbReference>
<dbReference type="PROSITE" id="PS50293">
    <property type="entry name" value="TPR_REGION"/>
    <property type="match status" value="3"/>
</dbReference>
<organism>
    <name type="scientific">Homo sapiens</name>
    <name type="common">Human</name>
    <dbReference type="NCBI Taxonomy" id="9606"/>
    <lineage>
        <taxon>Eukaryota</taxon>
        <taxon>Metazoa</taxon>
        <taxon>Chordata</taxon>
        <taxon>Craniata</taxon>
        <taxon>Vertebrata</taxon>
        <taxon>Euteleostomi</taxon>
        <taxon>Mammalia</taxon>
        <taxon>Eutheria</taxon>
        <taxon>Euarchontoglires</taxon>
        <taxon>Primates</taxon>
        <taxon>Haplorrhini</taxon>
        <taxon>Catarrhini</taxon>
        <taxon>Hominidae</taxon>
        <taxon>Homo</taxon>
    </lineage>
</organism>
<sequence length="671" mass="74606">MASGGSGGVSVPALWSEVNRYGQNGDFTRALKTVNKILQINKDDVTALHCKVVCLIQNGSFKEALNVINTHTKVLANNSLSFEKAYCEYRLNRIENALKTIESANQQTDKLKELYGQVLYRLERYDECLAVYRDLVRNSQDDYDEERKTNLSAVVAAQSNWEKVVPENLGLQEGTHELCYNTACALIGQGQLNQAMKILQKAEDLCRRSLSEDTDGTEEDPQAELAIIHGQMAYILQLQGRTEEALQLYNQIIKLKPTDVGLLAVIANNIITINKDQNVFDSKKKVKLTNAEGVEFKLSKKQLQAIEFNKALLAMYTNQAEQCRKISASLQSQSPEHLLPVLIQAAQLCREKQHTKAIELLQEFSDQHPENAAEIKLTMAQLKISQGNISKACLILRSIEELKHKPGMVSALVTMYSHEEDIDSAIEVFTQAIQWYQNHQPKSPAHLSLIREAANFKLKYGRKKEAISDLQQLWKQNPKDIHTLAQLISAYSLVDPEKAKALSKHLPSSDSMSLKVDVEALENSAGATYIRKKGGKVTGDSQPKEQGQGDLKKKKKKKKGKLPKNYDPKVTPDPERWLPMRERSYYRGRKKGKKKDQIGKGTQGATAGASSELDASKTVSSPPTSPRPGSAATVSASTSNIIPPRHQKPAGAPATKKKQQQKKKKGGKGGW</sequence>
<reference key="1">
    <citation type="submission" date="1998-07" db="EMBL/GenBank/DDBJ databases">
        <title>Protein SRP72 sequence of human signal recognition particle.</title>
        <authorList>
            <person name="Gowda K."/>
            <person name="Zwieb C."/>
        </authorList>
    </citation>
    <scope>NUCLEOTIDE SEQUENCE [MRNA] (ISOFORM 1)</scope>
</reference>
<reference key="2">
    <citation type="submission" date="1998-06" db="EMBL/GenBank/DDBJ databases">
        <title>Sequence of human signal recognition particle (SRP) 72.</title>
        <authorList>
            <person name="Utz P.J."/>
            <person name="Hottelet M."/>
            <person name="Miller I.J."/>
            <person name="Anderson P."/>
        </authorList>
    </citation>
    <scope>NUCLEOTIDE SEQUENCE [MRNA] (ISOFORM 1)</scope>
</reference>
<reference key="3">
    <citation type="journal article" date="2007" name="BMC Genomics">
        <title>The full-ORF clone resource of the German cDNA consortium.</title>
        <authorList>
            <person name="Bechtel S."/>
            <person name="Rosenfelder H."/>
            <person name="Duda A."/>
            <person name="Schmidt C.P."/>
            <person name="Ernst U."/>
            <person name="Wellenreuther R."/>
            <person name="Mehrle A."/>
            <person name="Schuster C."/>
            <person name="Bahr A."/>
            <person name="Bloecker H."/>
            <person name="Heubner D."/>
            <person name="Hoerlein A."/>
            <person name="Michel G."/>
            <person name="Wedler H."/>
            <person name="Koehrer K."/>
            <person name="Ottenwaelder B."/>
            <person name="Poustka A."/>
            <person name="Wiemann S."/>
            <person name="Schupp I."/>
        </authorList>
    </citation>
    <scope>NUCLEOTIDE SEQUENCE [LARGE SCALE MRNA] (ISOFORM 2)</scope>
    <source>
        <tissue>Esophageal carcinoma</tissue>
    </source>
</reference>
<reference key="4">
    <citation type="journal article" date="2005" name="Nature">
        <title>Generation and annotation of the DNA sequences of human chromosomes 2 and 4.</title>
        <authorList>
            <person name="Hillier L.W."/>
            <person name="Graves T.A."/>
            <person name="Fulton R.S."/>
            <person name="Fulton L.A."/>
            <person name="Pepin K.H."/>
            <person name="Minx P."/>
            <person name="Wagner-McPherson C."/>
            <person name="Layman D."/>
            <person name="Wylie K."/>
            <person name="Sekhon M."/>
            <person name="Becker M.C."/>
            <person name="Fewell G.A."/>
            <person name="Delehaunty K.D."/>
            <person name="Miner T.L."/>
            <person name="Nash W.E."/>
            <person name="Kremitzki C."/>
            <person name="Oddy L."/>
            <person name="Du H."/>
            <person name="Sun H."/>
            <person name="Bradshaw-Cordum H."/>
            <person name="Ali J."/>
            <person name="Carter J."/>
            <person name="Cordes M."/>
            <person name="Harris A."/>
            <person name="Isak A."/>
            <person name="van Brunt A."/>
            <person name="Nguyen C."/>
            <person name="Du F."/>
            <person name="Courtney L."/>
            <person name="Kalicki J."/>
            <person name="Ozersky P."/>
            <person name="Abbott S."/>
            <person name="Armstrong J."/>
            <person name="Belter E.A."/>
            <person name="Caruso L."/>
            <person name="Cedroni M."/>
            <person name="Cotton M."/>
            <person name="Davidson T."/>
            <person name="Desai A."/>
            <person name="Elliott G."/>
            <person name="Erb T."/>
            <person name="Fronick C."/>
            <person name="Gaige T."/>
            <person name="Haakenson W."/>
            <person name="Haglund K."/>
            <person name="Holmes A."/>
            <person name="Harkins R."/>
            <person name="Kim K."/>
            <person name="Kruchowski S.S."/>
            <person name="Strong C.M."/>
            <person name="Grewal N."/>
            <person name="Goyea E."/>
            <person name="Hou S."/>
            <person name="Levy A."/>
            <person name="Martinka S."/>
            <person name="Mead K."/>
            <person name="McLellan M.D."/>
            <person name="Meyer R."/>
            <person name="Randall-Maher J."/>
            <person name="Tomlinson C."/>
            <person name="Dauphin-Kohlberg S."/>
            <person name="Kozlowicz-Reilly A."/>
            <person name="Shah N."/>
            <person name="Swearengen-Shahid S."/>
            <person name="Snider J."/>
            <person name="Strong J.T."/>
            <person name="Thompson J."/>
            <person name="Yoakum M."/>
            <person name="Leonard S."/>
            <person name="Pearman C."/>
            <person name="Trani L."/>
            <person name="Radionenko M."/>
            <person name="Waligorski J.E."/>
            <person name="Wang C."/>
            <person name="Rock S.M."/>
            <person name="Tin-Wollam A.-M."/>
            <person name="Maupin R."/>
            <person name="Latreille P."/>
            <person name="Wendl M.C."/>
            <person name="Yang S.-P."/>
            <person name="Pohl C."/>
            <person name="Wallis J.W."/>
            <person name="Spieth J."/>
            <person name="Bieri T.A."/>
            <person name="Berkowicz N."/>
            <person name="Nelson J.O."/>
            <person name="Osborne J."/>
            <person name="Ding L."/>
            <person name="Meyer R."/>
            <person name="Sabo A."/>
            <person name="Shotland Y."/>
            <person name="Sinha P."/>
            <person name="Wohldmann P.E."/>
            <person name="Cook L.L."/>
            <person name="Hickenbotham M.T."/>
            <person name="Eldred J."/>
            <person name="Williams D."/>
            <person name="Jones T.A."/>
            <person name="She X."/>
            <person name="Ciccarelli F.D."/>
            <person name="Izaurralde E."/>
            <person name="Taylor J."/>
            <person name="Schmutz J."/>
            <person name="Myers R.M."/>
            <person name="Cox D.R."/>
            <person name="Huang X."/>
            <person name="McPherson J.D."/>
            <person name="Mardis E.R."/>
            <person name="Clifton S.W."/>
            <person name="Warren W.C."/>
            <person name="Chinwalla A.T."/>
            <person name="Eddy S.R."/>
            <person name="Marra M.A."/>
            <person name="Ovcharenko I."/>
            <person name="Furey T.S."/>
            <person name="Miller W."/>
            <person name="Eichler E.E."/>
            <person name="Bork P."/>
            <person name="Suyama M."/>
            <person name="Torrents D."/>
            <person name="Waterston R.H."/>
            <person name="Wilson R.K."/>
        </authorList>
    </citation>
    <scope>NUCLEOTIDE SEQUENCE [LARGE SCALE GENOMIC DNA]</scope>
</reference>
<reference key="5">
    <citation type="submission" date="2005-07" db="EMBL/GenBank/DDBJ databases">
        <authorList>
            <person name="Mural R.J."/>
            <person name="Istrail S."/>
            <person name="Sutton G."/>
            <person name="Florea L."/>
            <person name="Halpern A.L."/>
            <person name="Mobarry C.M."/>
            <person name="Lippert R."/>
            <person name="Walenz B."/>
            <person name="Shatkay H."/>
            <person name="Dew I."/>
            <person name="Miller J.R."/>
            <person name="Flanigan M.J."/>
            <person name="Edwards N.J."/>
            <person name="Bolanos R."/>
            <person name="Fasulo D."/>
            <person name="Halldorsson B.V."/>
            <person name="Hannenhalli S."/>
            <person name="Turner R."/>
            <person name="Yooseph S."/>
            <person name="Lu F."/>
            <person name="Nusskern D.R."/>
            <person name="Shue B.C."/>
            <person name="Zheng X.H."/>
            <person name="Zhong F."/>
            <person name="Delcher A.L."/>
            <person name="Huson D.H."/>
            <person name="Kravitz S.A."/>
            <person name="Mouchard L."/>
            <person name="Reinert K."/>
            <person name="Remington K.A."/>
            <person name="Clark A.G."/>
            <person name="Waterman M.S."/>
            <person name="Eichler E.E."/>
            <person name="Adams M.D."/>
            <person name="Hunkapiller M.W."/>
            <person name="Myers E.W."/>
            <person name="Venter J.C."/>
        </authorList>
    </citation>
    <scope>NUCLEOTIDE SEQUENCE [LARGE SCALE GENOMIC DNA]</scope>
</reference>
<reference key="6">
    <citation type="submission" date="2009-03" db="UniProtKB">
        <authorList>
            <person name="Bienvenut W.V."/>
            <person name="Waridel P."/>
            <person name="Quadroni M."/>
        </authorList>
    </citation>
    <scope>PROTEIN SEQUENCE OF 2-20; 63-84; 113-121; 148-163; 242-275; 288-297; 302-324; 326-350; 357-376; 465-475; 480-498; 516-531 AND 601-617</scope>
    <scope>CLEAVAGE OF INITIATOR METHIONINE</scope>
    <scope>ACETYLATION AT ALA-2</scope>
    <scope>IDENTIFICATION BY MASS SPECTROMETRY</scope>
    <source>
        <tissue>Cervix carcinoma</tissue>
    </source>
</reference>
<reference key="7">
    <citation type="journal article" date="2006" name="Protein Sci.">
        <title>Protein SRP68 of human signal recognition particle: identification of the RNA and SRP72 binding domains.</title>
        <authorList>
            <person name="Iakhiaeva E."/>
            <person name="Bhuiyan S.H."/>
            <person name="Yin J."/>
            <person name="Zwieb C."/>
        </authorList>
    </citation>
    <scope>SUBUNIT</scope>
    <scope>INTERACTION WITH SRP68</scope>
</reference>
<reference key="8">
    <citation type="journal article" date="2008" name="Mol. Cell">
        <title>Kinase-selective enrichment enables quantitative phosphoproteomics of the kinome across the cell cycle.</title>
        <authorList>
            <person name="Daub H."/>
            <person name="Olsen J.V."/>
            <person name="Bairlein M."/>
            <person name="Gnad F."/>
            <person name="Oppermann F.S."/>
            <person name="Korner R."/>
            <person name="Greff Z."/>
            <person name="Keri G."/>
            <person name="Stemmann O."/>
            <person name="Mann M."/>
        </authorList>
    </citation>
    <scope>PHOSPHORYLATION [LARGE SCALE ANALYSIS] AT THR-571</scope>
    <scope>IDENTIFICATION BY MASS SPECTROMETRY [LARGE SCALE ANALYSIS]</scope>
    <source>
        <tissue>Cervix carcinoma</tissue>
    </source>
</reference>
<reference key="9">
    <citation type="journal article" date="2008" name="Proc. Natl. Acad. Sci. U.S.A.">
        <title>A quantitative atlas of mitotic phosphorylation.</title>
        <authorList>
            <person name="Dephoure N."/>
            <person name="Zhou C."/>
            <person name="Villen J."/>
            <person name="Beausoleil S.A."/>
            <person name="Bakalarski C.E."/>
            <person name="Elledge S.J."/>
            <person name="Gygi S.P."/>
        </authorList>
    </citation>
    <scope>PHOSPHORYLATION [LARGE SCALE ANALYSIS] AT THR-618</scope>
    <scope>IDENTIFICATION BY MASS SPECTROMETRY [LARGE SCALE ANALYSIS]</scope>
    <source>
        <tissue>Cervix carcinoma</tissue>
    </source>
</reference>
<reference key="10">
    <citation type="journal article" date="2009" name="Anal. Chem.">
        <title>Lys-N and trypsin cover complementary parts of the phosphoproteome in a refined SCX-based approach.</title>
        <authorList>
            <person name="Gauci S."/>
            <person name="Helbig A.O."/>
            <person name="Slijper M."/>
            <person name="Krijgsveld J."/>
            <person name="Heck A.J."/>
            <person name="Mohammed S."/>
        </authorList>
    </citation>
    <scope>IDENTIFICATION BY MASS SPECTROMETRY [LARGE SCALE ANALYSIS]</scope>
</reference>
<reference key="11">
    <citation type="journal article" date="2009" name="Sci. Signal.">
        <title>Quantitative phosphoproteomic analysis of T cell receptor signaling reveals system-wide modulation of protein-protein interactions.</title>
        <authorList>
            <person name="Mayya V."/>
            <person name="Lundgren D.H."/>
            <person name="Hwang S.-I."/>
            <person name="Rezaul K."/>
            <person name="Wu L."/>
            <person name="Eng J.K."/>
            <person name="Rodionov V."/>
            <person name="Han D.K."/>
        </authorList>
    </citation>
    <scope>PHOSPHORYLATION [LARGE SCALE ANALYSIS] AT THR-618</scope>
    <scope>IDENTIFICATION BY MASS SPECTROMETRY [LARGE SCALE ANALYSIS]</scope>
    <source>
        <tissue>Leukemic T-cell</tissue>
    </source>
</reference>
<reference key="12">
    <citation type="journal article" date="2010" name="BMC Mol. Biol.">
        <title>Identification of amino acid residues in protein SRP72 required for binding to a kinked 5e motif of the human signal recognition particle RNA.</title>
        <authorList>
            <person name="Iakhiaeva E."/>
            <person name="Iakhiaev A."/>
            <person name="Zwieb C."/>
        </authorList>
    </citation>
    <scope>FUNCTION</scope>
    <scope>RNA BINDING</scope>
    <scope>MUTAGENESIS OF 553-LYS--LYS-558; 555-LYS-LYS-556; 577-TRP-LEU-578; PRO-579; MET-580; 579-PRO-MET-580; 581-ARG-GLU-582; 583-ARG-SER-584; 585-TYR-TYR-589; 587-ARG-GLY-588 AND 589-ARG-LYS-590</scope>
</reference>
<reference key="13">
    <citation type="journal article" date="2011" name="BMC Syst. Biol.">
        <title>Initial characterization of the human central proteome.</title>
        <authorList>
            <person name="Burkard T.R."/>
            <person name="Planyavsky M."/>
            <person name="Kaupe I."/>
            <person name="Breitwieser F.P."/>
            <person name="Buerckstuemmer T."/>
            <person name="Bennett K.L."/>
            <person name="Superti-Furga G."/>
            <person name="Colinge J."/>
        </authorList>
    </citation>
    <scope>IDENTIFICATION BY MASS SPECTROMETRY [LARGE SCALE ANALYSIS]</scope>
</reference>
<reference key="14">
    <citation type="journal article" date="2012" name="Mol. Cell. Proteomics">
        <title>Comparative large-scale characterisation of plant vs. mammal proteins reveals similar and idiosyncratic N-alpha acetylation features.</title>
        <authorList>
            <person name="Bienvenut W.V."/>
            <person name="Sumpton D."/>
            <person name="Martinez A."/>
            <person name="Lilla S."/>
            <person name="Espagne C."/>
            <person name="Meinnel T."/>
            <person name="Giglione C."/>
        </authorList>
    </citation>
    <scope>ACETYLATION [LARGE SCALE ANALYSIS] AT ALA-2</scope>
    <scope>CLEAVAGE OF INITIATOR METHIONINE [LARGE SCALE ANALYSIS]</scope>
    <scope>IDENTIFICATION BY MASS SPECTROMETRY [LARGE SCALE ANALYSIS]</scope>
</reference>
<reference key="15">
    <citation type="journal article" date="2012" name="Proc. Natl. Acad. Sci. U.S.A.">
        <title>N-terminal acetylome analyses and functional insights of the N-terminal acetyltransferase NatB.</title>
        <authorList>
            <person name="Van Damme P."/>
            <person name="Lasa M."/>
            <person name="Polevoda B."/>
            <person name="Gazquez C."/>
            <person name="Elosegui-Artola A."/>
            <person name="Kim D.S."/>
            <person name="De Juan-Pardo E."/>
            <person name="Demeyer K."/>
            <person name="Hole K."/>
            <person name="Larrea E."/>
            <person name="Timmerman E."/>
            <person name="Prieto J."/>
            <person name="Arnesen T."/>
            <person name="Sherman F."/>
            <person name="Gevaert K."/>
            <person name="Aldabe R."/>
        </authorList>
    </citation>
    <scope>ACETYLATION [LARGE SCALE ANALYSIS] AT ALA-2</scope>
    <scope>CLEAVAGE OF INITIATOR METHIONINE [LARGE SCALE ANALYSIS]</scope>
    <scope>IDENTIFICATION BY MASS SPECTROMETRY [LARGE SCALE ANALYSIS]</scope>
</reference>
<reference key="16">
    <citation type="journal article" date="2013" name="J. Proteome Res.">
        <title>Toward a comprehensive characterization of a human cancer cell phosphoproteome.</title>
        <authorList>
            <person name="Zhou H."/>
            <person name="Di Palma S."/>
            <person name="Preisinger C."/>
            <person name="Peng M."/>
            <person name="Polat A.N."/>
            <person name="Heck A.J."/>
            <person name="Mohammed S."/>
        </authorList>
    </citation>
    <scope>PHOSPHORYLATION [LARGE SCALE ANALYSIS] AT THR-571</scope>
    <scope>IDENTIFICATION BY MASS SPECTROMETRY [LARGE SCALE ANALYSIS]</scope>
    <source>
        <tissue>Cervix carcinoma</tissue>
        <tissue>Erythroleukemia</tissue>
    </source>
</reference>
<reference key="17">
    <citation type="journal article" date="2014" name="J. Proteomics">
        <title>An enzyme assisted RP-RPLC approach for in-depth analysis of human liver phosphoproteome.</title>
        <authorList>
            <person name="Bian Y."/>
            <person name="Song C."/>
            <person name="Cheng K."/>
            <person name="Dong M."/>
            <person name="Wang F."/>
            <person name="Huang J."/>
            <person name="Sun D."/>
            <person name="Wang L."/>
            <person name="Ye M."/>
            <person name="Zou H."/>
        </authorList>
    </citation>
    <scope>PHOSPHORYLATION [LARGE SCALE ANALYSIS] AT THR-618; SER-630 AND SER-635</scope>
    <scope>IDENTIFICATION BY MASS SPECTROMETRY [LARGE SCALE ANALYSIS]</scope>
    <source>
        <tissue>Liver</tissue>
    </source>
</reference>
<reference key="18">
    <citation type="journal article" date="2014" name="Proc. Natl. Acad. Sci. U.S.A.">
        <title>Mapping of SUMO sites and analysis of SUMOylation changes induced by external stimuli.</title>
        <authorList>
            <person name="Impens F."/>
            <person name="Radoshevich L."/>
            <person name="Cossart P."/>
            <person name="Ribet D."/>
        </authorList>
    </citation>
    <scope>SUMOYLATION [LARGE SCALE ANALYSIS] AT LYS-391</scope>
    <scope>IDENTIFICATION BY MASS SPECTROMETRY [LARGE SCALE ANALYSIS]</scope>
</reference>
<reference key="19">
    <citation type="journal article" date="2015" name="Proteomics">
        <title>N-terminome analysis of the human mitochondrial proteome.</title>
        <authorList>
            <person name="Vaca Jacome A.S."/>
            <person name="Rabilloud T."/>
            <person name="Schaeffer-Reiss C."/>
            <person name="Rompais M."/>
            <person name="Ayoub D."/>
            <person name="Lane L."/>
            <person name="Bairoch A."/>
            <person name="Van Dorsselaer A."/>
            <person name="Carapito C."/>
        </authorList>
    </citation>
    <scope>IDENTIFICATION BY MASS SPECTROMETRY [LARGE SCALE ANALYSIS]</scope>
</reference>
<reference key="20">
    <citation type="journal article" date="2017" name="Nat. Struct. Mol. Biol.">
        <title>Site-specific mapping of the human SUMO proteome reveals co-modification with phosphorylation.</title>
        <authorList>
            <person name="Hendriks I.A."/>
            <person name="Lyon D."/>
            <person name="Young C."/>
            <person name="Jensen L.J."/>
            <person name="Vertegaal A.C."/>
            <person name="Nielsen M.L."/>
        </authorList>
    </citation>
    <scope>SUMOYLATION [LARGE SCALE ANALYSIS] AT LYS-391</scope>
    <scope>IDENTIFICATION BY MASS SPECTROMETRY [LARGE SCALE ANALYSIS]</scope>
</reference>
<reference evidence="16 17" key="21">
    <citation type="journal article" date="2017" name="Fen Zi Xi Bao Sheng Wu Xue Bao">
        <title>Human apo-SRP72 and SRP68/72 complex structures reveal the molecular basis of protein translocation.</title>
        <authorList>
            <person name="Gao Y."/>
            <person name="Zhang Q."/>
            <person name="Lang Y."/>
            <person name="Liu Y."/>
            <person name="Dong X."/>
            <person name="Chen Z."/>
            <person name="Tian W."/>
            <person name="Tang J."/>
            <person name="Wu W."/>
            <person name="Tong Y."/>
            <person name="Chen Z."/>
        </authorList>
    </citation>
    <scope>X-RAY CRYSTALLOGRAPHY (1.70 ANGSTROMS) OF 1-163 IN COMPLEX WITH SRP68 MUTANT 608-GLU--610-LYS</scope>
    <scope>SUBUNIT</scope>
    <scope>INTERACTION WITH SRP68</scope>
    <scope>SUBCELLULAR LOCATION</scope>
    <scope>MUTAGENESIS OF 11-VAL--ASP-44; ASP-44; VAL-45; VAL-53; TYR-86; 113-GLU--VAL-131; 132-TRP--VAL-165 AND 136-VAL-ARG-137</scope>
</reference>
<reference evidence="14 15" key="22">
    <citation type="journal article" date="2017" name="Nucleic Acids Res.">
        <title>Structures of human SRP72 complexes provide insights into SRP RNA remodeling and ribosome interaction.</title>
        <authorList>
            <person name="Becker M.M."/>
            <person name="Lapouge K."/>
            <person name="Segnitz B."/>
            <person name="Wild K."/>
            <person name="Sinning I."/>
        </authorList>
    </citation>
    <scope>X-RAY CRYSTALLOGRAPHY (1.60 ANGSTROMS) OF 10-166 OF MUTANT LEU-31 AND LEU-65 AND OF 513-662 IN COMPLEX WITH SRP68; SRP19 AND 7SL RNA</scope>
    <scope>RNA BINDING</scope>
    <scope>SUBUNIT</scope>
    <scope>INTERACTION WITH SRP68</scope>
    <scope>MUTAGENESIS OF ILE-56</scope>
</reference>
<reference evidence="18" key="23">
    <citation type="journal article" date="2021" name="Sci. Adv.">
        <title>Receptor compaction and GTPase rearrangement drive SRP-mediated cotranslational protein translocation into the ER.</title>
        <authorList>
            <person name="Lee J.H."/>
            <person name="Jomaa A."/>
            <person name="Jomaa A."/>
            <person name="Chung S."/>
            <person name="Hwang Fu Y.H."/>
            <person name="Qian R."/>
            <person name="Sun X."/>
            <person name="Hsieh H.H."/>
            <person name="Chandrasekar S."/>
            <person name="Bi X."/>
            <person name="Mattei S."/>
            <person name="Boehringer D."/>
            <person name="Weiss S."/>
            <person name="Ban N."/>
            <person name="Shan S.O."/>
        </authorList>
    </citation>
    <scope>STRUCTURE BY ELECTRON MICROSCOPY (3.20 ANGSTROMS) OF SIGNAL RECOGNITION PARTICLE IN COMPLEX WITH RIBOSOME NASCENT CHAIN COMPLEX AND THE SRP RECEPTOR</scope>
</reference>
<reference key="24">
    <citation type="journal article" date="2012" name="Am. J. Hum. Genet.">
        <title>Exome sequencing identifies autosomal-dominant SRP72 mutations associated with familial aplasia and myelodysplasia.</title>
        <authorList>
            <person name="Kirwan M."/>
            <person name="Walne A.J."/>
            <person name="Plagnol V."/>
            <person name="Velangi M."/>
            <person name="Ho A."/>
            <person name="Hossain U."/>
            <person name="Vulliamy T."/>
            <person name="Dokal I."/>
        </authorList>
    </citation>
    <scope>VARIANT BMFS1 HIS-207</scope>
    <scope>SUBCELLULAR LOCATION</scope>
    <scope>CHARACTERIZATION OF VARIANT BMFS1 HIS-207</scope>
</reference>
<accession>O76094</accession>
<accession>G5E9Z8</accession>
<accession>Q7Z3C0</accession>
<comment type="function">
    <text evidence="2 6 8 10">Component of the signal recognition particle (SRP) complex, a ribonucleoprotein complex that mediates the cotranslational targeting of secretory and membrane proteins to the endoplasmic reticulum (ER) (PubMed:34020957). The SRP complex interacts with the signal sequence in nascent secretory and membrane proteins and directs them to the membrane of the ER (PubMed:34020957). The SRP complex targets the ribosome-nascent chain complex to the SRP receptor (SR), which is anchored in the ER, where SR compaction and GTPase rearrangement drive cotranslational protein translocation into the ER (PubMed:34020957). Binds the signal recognition particle RNA (7SL RNA) in presence of SRP68 (PubMed:21073748, PubMed:27899666). Can bind 7SL RNA with low affinity (PubMed:21073748, PubMed:27899666). The SRP complex possibly participates in the elongation arrest function (By similarity).</text>
</comment>
<comment type="subunit">
    <text evidence="1 5 8 9">Heterodimer with SRP68 (PubMed:16672232, PubMed:27899666, PubMed:28369529). SRP68-SRP72 heterodimer formation is stabilized by the presence of 7SL RNA (By similarity). Component of a signal recognition particle (SRP) complex that consists of a 7SL RNA molecule of 300 nucleotides and six protein subunits: SRP72, SRP68, SRP54, SRP19, SRP14 and SRP9 (By similarity). Within the SRP complex, interacts (via N-terminus) with SRP68 (via C-terminus) (PubMed:16672232, PubMed:27899666, PubMed:28369529).</text>
</comment>
<comment type="interaction">
    <interactant intactId="EBI-1058850">
        <id>O76094</id>
    </interactant>
    <interactant intactId="EBI-1048560">
        <id>Q9UHB9</id>
        <label>SRP68</label>
    </interactant>
    <organismsDiffer>false</organismsDiffer>
    <experiments>9</experiments>
</comment>
<comment type="interaction">
    <interactant intactId="EBI-1058850">
        <id>O76094</id>
    </interactant>
    <interactant intactId="EBI-749441">
        <id>O00204</id>
        <label>SULT2B1</label>
    </interactant>
    <organismsDiffer>false</organismsDiffer>
    <experiments>3</experiments>
</comment>
<comment type="subcellular location">
    <subcellularLocation>
        <location evidence="7">Cytoplasm</location>
    </subcellularLocation>
    <subcellularLocation>
        <location evidence="7 9">Endoplasmic reticulum</location>
    </subcellularLocation>
</comment>
<comment type="alternative products">
    <event type="alternative splicing"/>
    <isoform>
        <id>O76094-1</id>
        <name>1</name>
        <sequence type="displayed"/>
    </isoform>
    <isoform>
        <id>O76094-2</id>
        <name>2</name>
        <sequence type="described" ref="VSP_045576"/>
    </isoform>
</comment>
<comment type="disease" evidence="7">
    <disease id="DI-03471">
        <name>Bone marrow failure syndrome 1</name>
        <acronym>BMFS1</acronym>
        <description>An autosomal dominant disease characterized by aplastic anemia and myelodysplasia resulting from bone marrow failure. Aplastic anemia is a form of anemia in which the bone marrow fails to produce adequate numbers of peripheral blood elements. Myelodysplasia is a clonal hematopoietic stem cell disorder in which immature cells in the bone marrow become malformed and dysfunctional.</description>
        <dbReference type="MIM" id="614675"/>
    </disease>
    <text>The disease is caused by variants affecting the gene represented in this entry.</text>
</comment>
<comment type="similarity">
    <text evidence="13">Belongs to the SRP72 family.</text>
</comment>
<comment type="sequence caution" evidence="13">
    <conflict type="erroneous initiation">
        <sequence resource="EMBL-CDS" id="CAD97950"/>
    </conflict>
    <text>Extended N-terminus.</text>
</comment>
<comment type="sequence caution" evidence="13">
    <conflict type="frameshift">
        <sequence resource="EMBL-CDS" id="CAD97950"/>
    </conflict>
</comment>
<comment type="online information" name="Wikipedia">
    <link uri="https://en.wikipedia.org/wiki/Signal_recognition_particle"/>
    <text>Signal recognition particle entry</text>
</comment>
<keyword id="KW-0002">3D-structure</keyword>
<keyword id="KW-0007">Acetylation</keyword>
<keyword id="KW-0025">Alternative splicing</keyword>
<keyword id="KW-0963">Cytoplasm</keyword>
<keyword id="KW-0903">Direct protein sequencing</keyword>
<keyword id="KW-0225">Disease variant</keyword>
<keyword id="KW-0256">Endoplasmic reticulum</keyword>
<keyword id="KW-1017">Isopeptide bond</keyword>
<keyword id="KW-0597">Phosphoprotein</keyword>
<keyword id="KW-1267">Proteomics identification</keyword>
<keyword id="KW-1185">Reference proteome</keyword>
<keyword id="KW-0677">Repeat</keyword>
<keyword id="KW-0687">Ribonucleoprotein</keyword>
<keyword id="KW-0733">Signal recognition particle</keyword>
<keyword id="KW-0802">TPR repeat</keyword>
<keyword id="KW-0832">Ubl conjugation</keyword>
<protein>
    <recommendedName>
        <fullName>Signal recognition particle subunit SRP72</fullName>
        <shortName>SRP72</shortName>
    </recommendedName>
    <alternativeName>
        <fullName>Signal recognition particle 72 kDa protein</fullName>
    </alternativeName>
</protein>
<evidence type="ECO:0000250" key="1">
    <source>
        <dbReference type="UniProtKB" id="P33731"/>
    </source>
</evidence>
<evidence type="ECO:0000250" key="2">
    <source>
        <dbReference type="UniProtKB" id="P38688"/>
    </source>
</evidence>
<evidence type="ECO:0000255" key="3">
    <source>
        <dbReference type="PROSITE-ProRule" id="PRU00339"/>
    </source>
</evidence>
<evidence type="ECO:0000256" key="4">
    <source>
        <dbReference type="SAM" id="MobiDB-lite"/>
    </source>
</evidence>
<evidence type="ECO:0000269" key="5">
    <source>
    </source>
</evidence>
<evidence type="ECO:0000269" key="6">
    <source>
    </source>
</evidence>
<evidence type="ECO:0000269" key="7">
    <source>
    </source>
</evidence>
<evidence type="ECO:0000269" key="8">
    <source>
    </source>
</evidence>
<evidence type="ECO:0000269" key="9">
    <source>
    </source>
</evidence>
<evidence type="ECO:0000269" key="10">
    <source>
    </source>
</evidence>
<evidence type="ECO:0000269" key="11">
    <source ref="6"/>
</evidence>
<evidence type="ECO:0000303" key="12">
    <source>
    </source>
</evidence>
<evidence type="ECO:0000305" key="13"/>
<evidence type="ECO:0007744" key="14">
    <source>
        <dbReference type="PDB" id="5M72"/>
    </source>
</evidence>
<evidence type="ECO:0007744" key="15">
    <source>
        <dbReference type="PDB" id="5M73"/>
    </source>
</evidence>
<evidence type="ECO:0007744" key="16">
    <source>
        <dbReference type="PDB" id="5WRV"/>
    </source>
</evidence>
<evidence type="ECO:0007744" key="17">
    <source>
        <dbReference type="PDB" id="5WRW"/>
    </source>
</evidence>
<evidence type="ECO:0007744" key="18">
    <source>
        <dbReference type="PDB" id="7NFX"/>
    </source>
</evidence>
<evidence type="ECO:0007744" key="19">
    <source>
    </source>
</evidence>
<evidence type="ECO:0007744" key="20">
    <source>
    </source>
</evidence>
<evidence type="ECO:0007744" key="21">
    <source>
    </source>
</evidence>
<evidence type="ECO:0007744" key="22">
    <source>
    </source>
</evidence>
<evidence type="ECO:0007744" key="23">
    <source>
    </source>
</evidence>
<evidence type="ECO:0007744" key="24">
    <source>
    </source>
</evidence>
<evidence type="ECO:0007744" key="25">
    <source>
    </source>
</evidence>
<evidence type="ECO:0007744" key="26">
    <source>
    </source>
</evidence>
<evidence type="ECO:0007744" key="27">
    <source>
    </source>
</evidence>
<evidence type="ECO:0007829" key="28">
    <source>
        <dbReference type="PDB" id="5M72"/>
    </source>
</evidence>
<evidence type="ECO:0007829" key="29">
    <source>
        <dbReference type="PDB" id="5M73"/>
    </source>
</evidence>
<evidence type="ECO:0007829" key="30">
    <source>
        <dbReference type="PDB" id="8QVW"/>
    </source>
</evidence>
<gene>
    <name type="primary">SRP72</name>
</gene>
<proteinExistence type="evidence at protein level"/>
<name>SRP72_HUMAN</name>
<feature type="initiator methionine" description="Removed" evidence="11 22 23">
    <location>
        <position position="1"/>
    </location>
</feature>
<feature type="chain" id="PRO_0000135234" description="Signal recognition particle subunit SRP72">
    <location>
        <begin position="2"/>
        <end position="671"/>
    </location>
</feature>
<feature type="repeat" description="TPR 1" evidence="3">
    <location>
        <begin position="11"/>
        <end position="44"/>
    </location>
</feature>
<feature type="repeat" description="TPR 2" evidence="3">
    <location>
        <begin position="109"/>
        <end position="142"/>
    </location>
</feature>
<feature type="repeat" description="TPR 3" evidence="3">
    <location>
        <begin position="226"/>
        <end position="259"/>
    </location>
</feature>
<feature type="repeat" description="TPR 4" evidence="3">
    <location>
        <begin position="406"/>
        <end position="439"/>
    </location>
</feature>
<feature type="repeat" description="TPR 5" evidence="3">
    <location>
        <begin position="447"/>
        <end position="480"/>
    </location>
</feature>
<feature type="region of interest" description="Required for interaction with SRP68" evidence="5 9">
    <location>
        <begin position="9"/>
        <end position="163"/>
    </location>
</feature>
<feature type="region of interest" description="Required for the interaction with the SRP68/7SL RNA complex" evidence="1">
    <location>
        <begin position="379"/>
        <end position="509"/>
    </location>
</feature>
<feature type="region of interest" description="Disordered" evidence="4">
    <location>
        <begin position="532"/>
        <end position="671"/>
    </location>
</feature>
<feature type="region of interest" description="RNA-binding" evidence="6">
    <location>
        <begin position="545"/>
        <end position="617"/>
    </location>
</feature>
<feature type="compositionally biased region" description="Basic residues" evidence="4">
    <location>
        <begin position="552"/>
        <end position="562"/>
    </location>
</feature>
<feature type="compositionally biased region" description="Basic and acidic residues" evidence="4">
    <location>
        <begin position="564"/>
        <end position="585"/>
    </location>
</feature>
<feature type="compositionally biased region" description="Polar residues" evidence="4">
    <location>
        <begin position="632"/>
        <end position="641"/>
    </location>
</feature>
<feature type="compositionally biased region" description="Basic residues" evidence="4">
    <location>
        <begin position="655"/>
        <end position="671"/>
    </location>
</feature>
<feature type="modified residue" description="N-acetylalanine" evidence="11 22 23">
    <location>
        <position position="2"/>
    </location>
</feature>
<feature type="modified residue" description="Phosphothreonine" evidence="20 24">
    <location>
        <position position="571"/>
    </location>
</feature>
<feature type="modified residue" description="Phosphothreonine" evidence="19 21 25">
    <location>
        <position position="618"/>
    </location>
</feature>
<feature type="modified residue" description="Phosphoserine" evidence="25">
    <location>
        <position position="630"/>
    </location>
</feature>
<feature type="modified residue" description="Phosphoserine" evidence="25">
    <location>
        <position position="635"/>
    </location>
</feature>
<feature type="cross-link" description="Glycyl lysine isopeptide (Lys-Gly) (interchain with G-Cter in SUMO1); alternate" evidence="26">
    <location>
        <position position="391"/>
    </location>
</feature>
<feature type="cross-link" description="Glycyl lysine isopeptide (Lys-Gly) (interchain with G-Cter in SUMO2); alternate" evidence="26 27">
    <location>
        <position position="391"/>
    </location>
</feature>
<feature type="splice variant" id="VSP_045576" description="In isoform 2." evidence="12">
    <location>
        <begin position="215"/>
        <end position="275"/>
    </location>
</feature>
<feature type="sequence variant" id="VAR_068522" description="In BMFS1; affects protein localization to ER; dbSNP:rs387907189." evidence="7">
    <original>R</original>
    <variation>H</variation>
    <location>
        <position position="207"/>
    </location>
</feature>
<feature type="mutagenesis site" description="Loss of interaction with SRP68." evidence="9">
    <location>
        <begin position="11"/>
        <end position="44"/>
    </location>
</feature>
<feature type="mutagenesis site" description="Reduced interaction with SRP68." evidence="9">
    <original>D</original>
    <variation>E</variation>
    <location>
        <position position="44"/>
    </location>
</feature>
<feature type="mutagenesis site" description="Reduced interaction with SRP68." evidence="9">
    <original>V</original>
    <variation>I</variation>
    <location>
        <position position="45"/>
    </location>
</feature>
<feature type="mutagenesis site" description="Reduced interaction with SRP68. Diminished localization to endoplasmic reticulum." evidence="9">
    <original>V</original>
    <variation>I</variation>
    <location>
        <position position="53"/>
    </location>
</feature>
<feature type="mutagenesis site" description="Loss of interaction with SRP72; when associated with A-598 in SRP68." evidence="8">
    <original>I</original>
    <variation>A</variation>
    <location>
        <position position="56"/>
    </location>
</feature>
<feature type="mutagenesis site" description="Loss of interaction with SRP68. Diminished localization to endoplasmic reticulum." evidence="9">
    <original>Y</original>
    <variation>C</variation>
    <location>
        <position position="86"/>
    </location>
</feature>
<feature type="mutagenesis site" description="Loss of interaction with SRP68." evidence="9">
    <location>
        <begin position="113"/>
        <end position="131"/>
    </location>
</feature>
<feature type="mutagenesis site" description="Loss of interaction with SRP68." evidence="9">
    <location>
        <begin position="132"/>
        <end position="165"/>
    </location>
</feature>
<feature type="mutagenesis site" description="Stronger interaction with SRP68." evidence="9">
    <original>VR</original>
    <variation>AA</variation>
    <location>
        <begin position="136"/>
        <end position="137"/>
    </location>
</feature>
<feature type="mutagenesis site" description="Loss of RNA binding." evidence="6">
    <original>KKKKKK</original>
    <variation>AAAAAA</variation>
    <location>
        <begin position="553"/>
        <end position="558"/>
    </location>
</feature>
<feature type="mutagenesis site" description="Diminished RNA binding." evidence="6">
    <original>KK</original>
    <variation>AA</variation>
    <location>
        <begin position="555"/>
        <end position="556"/>
    </location>
</feature>
<feature type="mutagenesis site" description="Loss of RNA binding." evidence="6">
    <original>WL</original>
    <variation>AA</variation>
    <location>
        <begin position="577"/>
        <end position="578"/>
    </location>
</feature>
<feature type="mutagenesis site" description="Diminished RNA binding." evidence="6">
    <original>PM</original>
    <variation>AA</variation>
    <location>
        <begin position="579"/>
        <end position="580"/>
    </location>
</feature>
<feature type="mutagenesis site" description="Strongly reduced RNA binding." evidence="6">
    <original>P</original>
    <variation>A</variation>
    <location>
        <position position="579"/>
    </location>
</feature>
<feature type="mutagenesis site" description="Does not affect RNA binding." evidence="6">
    <original>M</original>
    <variation>A</variation>
    <location>
        <position position="580"/>
    </location>
</feature>
<feature type="mutagenesis site" description="Diminished RNA binding." evidence="6">
    <original>RE</original>
    <variation>AA</variation>
    <location>
        <begin position="581"/>
        <end position="582"/>
    </location>
</feature>
<feature type="mutagenesis site" description="Loss of RNA binding." evidence="6">
    <original>RS</original>
    <variation>AA</variation>
    <location>
        <begin position="583"/>
        <end position="584"/>
    </location>
</feature>
<feature type="mutagenesis site" description="Diminished RNA binding." evidence="6">
    <original>YY</original>
    <variation>AA</variation>
    <location>
        <begin position="585"/>
        <end position="586"/>
    </location>
</feature>
<feature type="mutagenesis site" description="No impact on RNA binding." evidence="6">
    <original>RG</original>
    <variation>AA</variation>
    <location>
        <begin position="587"/>
        <end position="588"/>
    </location>
</feature>
<feature type="mutagenesis site" description="No impact on RNA binding." evidence="6">
    <original>RK</original>
    <variation>AA</variation>
    <location>
        <begin position="589"/>
        <end position="590"/>
    </location>
</feature>
<feature type="sequence conflict" description="In Ref. 3; CAD97950." evidence="13" ref="3">
    <original>Q</original>
    <variation>R</variation>
    <location>
        <position position="23"/>
    </location>
</feature>
<feature type="helix" evidence="28">
    <location>
        <begin position="11"/>
        <end position="23"/>
    </location>
</feature>
<feature type="helix" evidence="28">
    <location>
        <begin position="27"/>
        <end position="40"/>
    </location>
</feature>
<feature type="helix" evidence="28">
    <location>
        <begin position="45"/>
        <end position="57"/>
    </location>
</feature>
<feature type="helix" evidence="28">
    <location>
        <begin position="61"/>
        <end position="70"/>
    </location>
</feature>
<feature type="helix" evidence="28">
    <location>
        <begin position="72"/>
        <end position="75"/>
    </location>
</feature>
<feature type="helix" evidence="28">
    <location>
        <begin position="81"/>
        <end position="90"/>
    </location>
</feature>
<feature type="helix" evidence="28">
    <location>
        <begin position="94"/>
        <end position="102"/>
    </location>
</feature>
<feature type="helix" evidence="28">
    <location>
        <begin position="109"/>
        <end position="121"/>
    </location>
</feature>
<feature type="helix" evidence="28">
    <location>
        <begin position="125"/>
        <end position="138"/>
    </location>
</feature>
<feature type="helix" evidence="28">
    <location>
        <begin position="144"/>
        <end position="158"/>
    </location>
</feature>
<feature type="helix" evidence="30">
    <location>
        <begin position="176"/>
        <end position="189"/>
    </location>
</feature>
<feature type="helix" evidence="30">
    <location>
        <begin position="193"/>
        <end position="210"/>
    </location>
</feature>
<feature type="helix" evidence="30">
    <location>
        <begin position="223"/>
        <end position="238"/>
    </location>
</feature>
<feature type="helix" evidence="30">
    <location>
        <begin position="242"/>
        <end position="255"/>
    </location>
</feature>
<feature type="helix" evidence="30">
    <location>
        <begin position="261"/>
        <end position="274"/>
    </location>
</feature>
<feature type="helix" evidence="30">
    <location>
        <begin position="279"/>
        <end position="289"/>
    </location>
</feature>
<feature type="helix" evidence="30">
    <location>
        <begin position="294"/>
        <end position="297"/>
    </location>
</feature>
<feature type="helix" evidence="30">
    <location>
        <begin position="300"/>
        <end position="316"/>
    </location>
</feature>
<feature type="helix" evidence="30">
    <location>
        <begin position="321"/>
        <end position="332"/>
    </location>
</feature>
<feature type="helix" evidence="30">
    <location>
        <begin position="341"/>
        <end position="350"/>
    </location>
</feature>
<feature type="helix" evidence="30">
    <location>
        <begin position="355"/>
        <end position="367"/>
    </location>
</feature>
<feature type="helix" evidence="30">
    <location>
        <begin position="369"/>
        <end position="371"/>
    </location>
</feature>
<feature type="helix" evidence="30">
    <location>
        <begin position="372"/>
        <end position="382"/>
    </location>
</feature>
<feature type="strand" evidence="30">
    <location>
        <begin position="385"/>
        <end position="387"/>
    </location>
</feature>
<feature type="helix" evidence="30">
    <location>
        <begin position="389"/>
        <end position="397"/>
    </location>
</feature>
<feature type="helix" evidence="30">
    <location>
        <begin position="406"/>
        <end position="418"/>
    </location>
</feature>
<feature type="helix" evidence="30">
    <location>
        <begin position="422"/>
        <end position="439"/>
    </location>
</feature>
<feature type="helix" evidence="30">
    <location>
        <begin position="444"/>
        <end position="459"/>
    </location>
</feature>
<feature type="helix" evidence="29">
    <location>
        <begin position="563"/>
        <end position="566"/>
    </location>
</feature>
<feature type="turn" evidence="29">
    <location>
        <begin position="567"/>
        <end position="570"/>
    </location>
</feature>
<feature type="turn" evidence="29">
    <location>
        <begin position="580"/>
        <end position="582"/>
    </location>
</feature>
<feature type="helix" evidence="29">
    <location>
        <begin position="590"/>
        <end position="602"/>
    </location>
</feature>